<gene>
    <name type="ordered locus">Smlt3713</name>
</gene>
<comment type="subcellular location">
    <subcellularLocation>
        <location evidence="1">Cytoplasm</location>
    </subcellularLocation>
</comment>
<comment type="similarity">
    <text evidence="1">Belongs to the TACO1 family.</text>
</comment>
<feature type="chain" id="PRO_1000132239" description="Probable transcriptional regulatory protein Smlt3713">
    <location>
        <begin position="1"/>
        <end position="243"/>
    </location>
</feature>
<organism>
    <name type="scientific">Stenotrophomonas maltophilia (strain K279a)</name>
    <dbReference type="NCBI Taxonomy" id="522373"/>
    <lineage>
        <taxon>Bacteria</taxon>
        <taxon>Pseudomonadati</taxon>
        <taxon>Pseudomonadota</taxon>
        <taxon>Gammaproteobacteria</taxon>
        <taxon>Lysobacterales</taxon>
        <taxon>Lysobacteraceae</taxon>
        <taxon>Stenotrophomonas</taxon>
        <taxon>Stenotrophomonas maltophilia group</taxon>
    </lineage>
</organism>
<reference key="1">
    <citation type="journal article" date="2008" name="Genome Biol.">
        <title>The complete genome, comparative and functional analysis of Stenotrophomonas maltophilia reveals an organism heavily shielded by drug resistance determinants.</title>
        <authorList>
            <person name="Crossman L.C."/>
            <person name="Gould V.C."/>
            <person name="Dow J.M."/>
            <person name="Vernikos G.S."/>
            <person name="Okazaki A."/>
            <person name="Sebaihia M."/>
            <person name="Saunders D."/>
            <person name="Arrowsmith C."/>
            <person name="Carver T."/>
            <person name="Peters N."/>
            <person name="Adlem E."/>
            <person name="Kerhornou A."/>
            <person name="Lord A."/>
            <person name="Murphy L."/>
            <person name="Seeger K."/>
            <person name="Squares R."/>
            <person name="Rutter S."/>
            <person name="Quail M.A."/>
            <person name="Rajandream M.A."/>
            <person name="Harris D."/>
            <person name="Churcher C."/>
            <person name="Bentley S.D."/>
            <person name="Parkhill J."/>
            <person name="Thomson N.R."/>
            <person name="Avison M.B."/>
        </authorList>
    </citation>
    <scope>NUCLEOTIDE SEQUENCE [LARGE SCALE GENOMIC DNA]</scope>
    <source>
        <strain>K279a</strain>
    </source>
</reference>
<dbReference type="EMBL" id="AM743169">
    <property type="protein sequence ID" value="CAQ47128.1"/>
    <property type="molecule type" value="Genomic_DNA"/>
</dbReference>
<dbReference type="RefSeq" id="WP_005410758.1">
    <property type="nucleotide sequence ID" value="NC_010943.1"/>
</dbReference>
<dbReference type="SMR" id="B2FRN8"/>
<dbReference type="EnsemblBacteria" id="CAQ47128">
    <property type="protein sequence ID" value="CAQ47128"/>
    <property type="gene ID" value="Smlt3713"/>
</dbReference>
<dbReference type="KEGG" id="sml:Smlt3713"/>
<dbReference type="eggNOG" id="COG0217">
    <property type="taxonomic scope" value="Bacteria"/>
</dbReference>
<dbReference type="HOGENOM" id="CLU_062974_2_2_6"/>
<dbReference type="Proteomes" id="UP000008840">
    <property type="component" value="Chromosome"/>
</dbReference>
<dbReference type="GO" id="GO:0005829">
    <property type="term" value="C:cytosol"/>
    <property type="evidence" value="ECO:0007669"/>
    <property type="project" value="TreeGrafter"/>
</dbReference>
<dbReference type="GO" id="GO:0003677">
    <property type="term" value="F:DNA binding"/>
    <property type="evidence" value="ECO:0007669"/>
    <property type="project" value="UniProtKB-UniRule"/>
</dbReference>
<dbReference type="GO" id="GO:0006355">
    <property type="term" value="P:regulation of DNA-templated transcription"/>
    <property type="evidence" value="ECO:0007669"/>
    <property type="project" value="UniProtKB-UniRule"/>
</dbReference>
<dbReference type="FunFam" id="1.10.10.200:FF:000007">
    <property type="entry name" value="Probable transcriptional regulatory protein AC801_15750"/>
    <property type="match status" value="1"/>
</dbReference>
<dbReference type="FunFam" id="3.30.70.980:FF:000002">
    <property type="entry name" value="Probable transcriptional regulatory protein YebC"/>
    <property type="match status" value="1"/>
</dbReference>
<dbReference type="Gene3D" id="1.10.10.200">
    <property type="match status" value="1"/>
</dbReference>
<dbReference type="Gene3D" id="3.30.70.980">
    <property type="match status" value="2"/>
</dbReference>
<dbReference type="HAMAP" id="MF_00693">
    <property type="entry name" value="Transcrip_reg_TACO1"/>
    <property type="match status" value="1"/>
</dbReference>
<dbReference type="InterPro" id="IPR017856">
    <property type="entry name" value="Integrase-like_N"/>
</dbReference>
<dbReference type="InterPro" id="IPR048300">
    <property type="entry name" value="TACO1_YebC-like_2nd/3rd_dom"/>
</dbReference>
<dbReference type="InterPro" id="IPR049083">
    <property type="entry name" value="TACO1_YebC_N"/>
</dbReference>
<dbReference type="InterPro" id="IPR002876">
    <property type="entry name" value="Transcrip_reg_TACO1-like"/>
</dbReference>
<dbReference type="InterPro" id="IPR026564">
    <property type="entry name" value="Transcrip_reg_TACO1-like_dom3"/>
</dbReference>
<dbReference type="InterPro" id="IPR029072">
    <property type="entry name" value="YebC-like"/>
</dbReference>
<dbReference type="NCBIfam" id="NF001030">
    <property type="entry name" value="PRK00110.1"/>
    <property type="match status" value="1"/>
</dbReference>
<dbReference type="NCBIfam" id="NF009044">
    <property type="entry name" value="PRK12378.1"/>
    <property type="match status" value="1"/>
</dbReference>
<dbReference type="NCBIfam" id="TIGR01033">
    <property type="entry name" value="YebC/PmpR family DNA-binding transcriptional regulator"/>
    <property type="match status" value="1"/>
</dbReference>
<dbReference type="PANTHER" id="PTHR12532:SF6">
    <property type="entry name" value="TRANSCRIPTIONAL REGULATORY PROTEIN YEBC-RELATED"/>
    <property type="match status" value="1"/>
</dbReference>
<dbReference type="PANTHER" id="PTHR12532">
    <property type="entry name" value="TRANSLATIONAL ACTIVATOR OF CYTOCHROME C OXIDASE 1"/>
    <property type="match status" value="1"/>
</dbReference>
<dbReference type="Pfam" id="PF20772">
    <property type="entry name" value="TACO1_YebC_N"/>
    <property type="match status" value="1"/>
</dbReference>
<dbReference type="Pfam" id="PF01709">
    <property type="entry name" value="Transcrip_reg"/>
    <property type="match status" value="1"/>
</dbReference>
<dbReference type="SUPFAM" id="SSF75625">
    <property type="entry name" value="YebC-like"/>
    <property type="match status" value="1"/>
</dbReference>
<evidence type="ECO:0000255" key="1">
    <source>
        <dbReference type="HAMAP-Rule" id="MF_00693"/>
    </source>
</evidence>
<sequence>MGRGPSIEARKNASDAKRGKIFTKIIREIGVAARGGGGDPNNNPRLRVAVDKGLAVNMSKDVIERAIKKATGELEGVDYEEIRYEGYAPGGVAVIVDCLTDNRVRTVADVRHAFSKCGGNMGTEGSVAFMFKRLGVLSFAPGADEEAITEAAIEAGADDIVVYPDDGSIDVVTSPDAFSAVKDAMAAAGHVADHAEITFRADNDIKVEGEVALQVKKLLDMLEDLDDVQDVYSNAELGADAYA</sequence>
<proteinExistence type="inferred from homology"/>
<accession>B2FRN8</accession>
<protein>
    <recommendedName>
        <fullName evidence="1">Probable transcriptional regulatory protein Smlt3713</fullName>
    </recommendedName>
</protein>
<name>Y3713_STRMK</name>
<keyword id="KW-0963">Cytoplasm</keyword>
<keyword id="KW-0238">DNA-binding</keyword>
<keyword id="KW-1185">Reference proteome</keyword>
<keyword id="KW-0804">Transcription</keyword>
<keyword id="KW-0805">Transcription regulation</keyword>